<feature type="chain" id="PRO_0000461563" description="Demethylluteothin O-methyltransferase">
    <location>
        <begin position="1"/>
        <end position="230"/>
    </location>
</feature>
<sequence length="230" mass="25293">MTTTSASTTDHLIDQQVIDGQAGYTKSFLNIYDLAVFKGTAPLAWHCSPAVSRQMYDTCLGANHVEIGVGTGYLLDNATFPVADPKITLVDLNPNSLAHTAQRLNRYDVTTVRANVLEPLPLEERAYDSVGMSYLLHCVPGSIKEKGIALKHAAAVVRPGGVVFGATVLSSGVPVSARGRWTMNYLNKRGDFHNQEDNYDDLRDQLAQYFPRFQLTSRGCVGIWRAWTTD</sequence>
<name>AURI_STRTU</name>
<comment type="function">
    <text evidence="2">Methyltransferase involved in the biosynthesis of the antibiotic aureothin, a nitroaryl polyketide metabolite with antifungal, cytotoxic and insecticidal activities (PubMed:16292785). Catalyzes the methylation of demethylluteothin to luteothin (also called deoxyaureothin) (PubMed:16292785). Is specific for its gamma-pyrone substrate, and does not act on the alpha-pyrone isomer (PubMed:16292785).</text>
</comment>
<comment type="catalytic activity">
    <reaction evidence="2">
        <text>demethylluteothin + S-adenosyl-L-methionine = luteothin + S-adenosyl-L-homocysteine</text>
        <dbReference type="Rhea" id="RHEA:59064"/>
        <dbReference type="ChEBI" id="CHEBI:57856"/>
        <dbReference type="ChEBI" id="CHEBI:59789"/>
        <dbReference type="ChEBI" id="CHEBI:142840"/>
        <dbReference type="ChEBI" id="CHEBI:142870"/>
        <dbReference type="EC" id="2.1.1.353"/>
    </reaction>
    <physiologicalReaction direction="left-to-right" evidence="2">
        <dbReference type="Rhea" id="RHEA:59065"/>
    </physiologicalReaction>
</comment>
<comment type="pathway">
    <text evidence="6 7">Antibiotic biosynthesis.</text>
</comment>
<comment type="pathway">
    <text evidence="6 7">Polyketide biosynthesis.</text>
</comment>
<comment type="disruption phenotype">
    <text evidence="1 2">Inactivation of the gene yields a mutant that can produce nor-deoxyaureothin and its C6-hydroxylated derivative, but not aureothin.</text>
</comment>
<comment type="similarity">
    <text evidence="5">Belongs to the methyltransferase superfamily.</text>
</comment>
<protein>
    <recommendedName>
        <fullName evidence="5">Demethylluteothin O-methyltransferase</fullName>
        <ecNumber evidence="2">2.1.1.353</ecNumber>
    </recommendedName>
    <alternativeName>
        <fullName evidence="4">Gamma-pyrone methyltransferase</fullName>
    </alternativeName>
    <alternativeName>
        <fullName evidence="4">SAM-dependent pyrone methyltransferase</fullName>
    </alternativeName>
</protein>
<accession>Q70KH3</accession>
<gene>
    <name evidence="3" type="primary">aurI</name>
</gene>
<evidence type="ECO:0000269" key="1">
    <source>
    </source>
</evidence>
<evidence type="ECO:0000269" key="2">
    <source>
    </source>
</evidence>
<evidence type="ECO:0000303" key="3">
    <source>
    </source>
</evidence>
<evidence type="ECO:0000303" key="4">
    <source>
    </source>
</evidence>
<evidence type="ECO:0000305" key="5"/>
<evidence type="ECO:0000305" key="6">
    <source>
    </source>
</evidence>
<evidence type="ECO:0000305" key="7">
    <source>
    </source>
</evidence>
<evidence type="ECO:0000312" key="8">
    <source>
        <dbReference type="EMBL" id="CAE02607.1"/>
    </source>
</evidence>
<organism>
    <name type="scientific">Streptomyces thioluteus</name>
    <dbReference type="NCBI Taxonomy" id="66431"/>
    <lineage>
        <taxon>Bacteria</taxon>
        <taxon>Bacillati</taxon>
        <taxon>Actinomycetota</taxon>
        <taxon>Actinomycetes</taxon>
        <taxon>Kitasatosporales</taxon>
        <taxon>Streptomycetaceae</taxon>
        <taxon>Streptomyces</taxon>
    </lineage>
</organism>
<reference evidence="8" key="1">
    <citation type="journal article" date="2003" name="Chem. Biol.">
        <title>Iteration as programmed event during polyketide assembly; molecular analysis of the aureothin biosynthesis gene cluster.</title>
        <authorList>
            <person name="He J."/>
            <person name="Hertweck C."/>
        </authorList>
    </citation>
    <scope>NUCLEOTIDE SEQUENCE [GENOMIC DNA]</scope>
    <source>
        <strain>HKI-227</strain>
    </source>
</reference>
<reference key="2">
    <citation type="journal article" date="2004" name="J. Am. Chem. Soc.">
        <title>Formation of the aureothin tetrahydrofuran ring by a bifunctional cytochrome p450 monooxygenase.</title>
        <authorList>
            <person name="He J."/>
            <person name="Mueller M."/>
            <person name="Hertweck C."/>
        </authorList>
    </citation>
    <scope>DISRUPTION PHENOTYPE</scope>
</reference>
<reference key="3">
    <citation type="journal article" date="2006" name="ChemBioChem">
        <title>Dissection of the late steps in aureothin biosynthesis.</title>
        <authorList>
            <person name="Mueller M."/>
            <person name="He J."/>
            <person name="Hertweck C."/>
        </authorList>
    </citation>
    <scope>FUNCTION</scope>
    <scope>CATALYTIC ACTIVITY</scope>
    <scope>DISRUPTION PHENOTYPE</scope>
</reference>
<dbReference type="EC" id="2.1.1.353" evidence="2"/>
<dbReference type="EMBL" id="AJ575648">
    <property type="protein sequence ID" value="CAE02607.1"/>
    <property type="molecule type" value="Genomic_DNA"/>
</dbReference>
<dbReference type="RefSeq" id="WP_344960329.1">
    <property type="nucleotide sequence ID" value="NZ_BAAAXZ010000004.1"/>
</dbReference>
<dbReference type="SMR" id="Q70KH3"/>
<dbReference type="KEGG" id="ag:CAE02607"/>
<dbReference type="BioCyc" id="MetaCyc:MONOMER-20707"/>
<dbReference type="BRENDA" id="2.1.1.353">
    <property type="organism ID" value="12297"/>
</dbReference>
<dbReference type="GO" id="GO:0008168">
    <property type="term" value="F:methyltransferase activity"/>
    <property type="evidence" value="ECO:0007669"/>
    <property type="project" value="UniProtKB-KW"/>
</dbReference>
<dbReference type="GO" id="GO:0017000">
    <property type="term" value="P:antibiotic biosynthetic process"/>
    <property type="evidence" value="ECO:0007669"/>
    <property type="project" value="UniProtKB-KW"/>
</dbReference>
<dbReference type="GO" id="GO:0032259">
    <property type="term" value="P:methylation"/>
    <property type="evidence" value="ECO:0007669"/>
    <property type="project" value="UniProtKB-KW"/>
</dbReference>
<dbReference type="CDD" id="cd02440">
    <property type="entry name" value="AdoMet_MTases"/>
    <property type="match status" value="1"/>
</dbReference>
<dbReference type="Gene3D" id="3.40.50.150">
    <property type="entry name" value="Vaccinia Virus protein VP39"/>
    <property type="match status" value="1"/>
</dbReference>
<dbReference type="InterPro" id="IPR013217">
    <property type="entry name" value="Methyltransf_12"/>
</dbReference>
<dbReference type="InterPro" id="IPR016584">
    <property type="entry name" value="MeTrfase_VrtF"/>
</dbReference>
<dbReference type="InterPro" id="IPR029063">
    <property type="entry name" value="SAM-dependent_MTases_sf"/>
</dbReference>
<dbReference type="Pfam" id="PF08242">
    <property type="entry name" value="Methyltransf_12"/>
    <property type="match status" value="1"/>
</dbReference>
<dbReference type="PIRSF" id="PIRSF011491">
    <property type="entry name" value="Mtase_YbcY_prd"/>
    <property type="match status" value="1"/>
</dbReference>
<dbReference type="SUPFAM" id="SSF53335">
    <property type="entry name" value="S-adenosyl-L-methionine-dependent methyltransferases"/>
    <property type="match status" value="1"/>
</dbReference>
<proteinExistence type="evidence at protein level"/>
<keyword id="KW-0045">Antibiotic biosynthesis</keyword>
<keyword id="KW-0489">Methyltransferase</keyword>
<keyword id="KW-0949">S-adenosyl-L-methionine</keyword>
<keyword id="KW-0808">Transferase</keyword>